<feature type="chain" id="PRO_1000068053" description="Large ribosomal subunit protein uL23">
    <location>
        <begin position="1"/>
        <end position="93"/>
    </location>
</feature>
<comment type="function">
    <text evidence="1">One of the early assembly proteins it binds 23S rRNA. One of the proteins that surrounds the polypeptide exit tunnel on the outside of the ribosome. Forms the main docking site for trigger factor binding to the ribosome.</text>
</comment>
<comment type="subunit">
    <text evidence="1">Part of the 50S ribosomal subunit. Contacts protein L29, and trigger factor when it is bound to the ribosome.</text>
</comment>
<comment type="similarity">
    <text evidence="1">Belongs to the universal ribosomal protein uL23 family.</text>
</comment>
<sequence length="93" mass="10524">MADITDIKTILYTEKSLNLQEQGVVVIQTSPKMTKTGLKAVLKEYFGVTPKSINSLRMDGKVKRFRGRLGQRNDYKKFYVKLPEGVSLENAEA</sequence>
<protein>
    <recommendedName>
        <fullName evidence="1">Large ribosomal subunit protein uL23</fullName>
    </recommendedName>
    <alternativeName>
        <fullName evidence="2">50S ribosomal protein L23</fullName>
    </alternativeName>
</protein>
<reference key="1">
    <citation type="submission" date="2007-07" db="EMBL/GenBank/DDBJ databases">
        <title>Complete genome sequence of Campylobacter jejuni subsp doylei 269.97 isolated from human blood.</title>
        <authorList>
            <person name="Fouts D.E."/>
            <person name="Mongodin E.F."/>
            <person name="Puiu D."/>
            <person name="Sebastian Y."/>
            <person name="Miller W.G."/>
            <person name="Mandrell R.E."/>
            <person name="Lastovica A.J."/>
            <person name="Nelson K.E."/>
        </authorList>
    </citation>
    <scope>NUCLEOTIDE SEQUENCE [LARGE SCALE GENOMIC DNA]</scope>
    <source>
        <strain>ATCC BAA-1458 / RM4099 / 269.97</strain>
    </source>
</reference>
<name>RL23_CAMJD</name>
<gene>
    <name evidence="1" type="primary">rplW</name>
    <name type="ordered locus">JJD26997_2079</name>
</gene>
<accession>A7H654</accession>
<proteinExistence type="inferred from homology"/>
<dbReference type="EMBL" id="CP000768">
    <property type="protein sequence ID" value="ABS43385.1"/>
    <property type="molecule type" value="Genomic_DNA"/>
</dbReference>
<dbReference type="SMR" id="A7H654"/>
<dbReference type="KEGG" id="cjd:JJD26997_2079"/>
<dbReference type="HOGENOM" id="CLU_037562_3_1_7"/>
<dbReference type="Proteomes" id="UP000002302">
    <property type="component" value="Chromosome"/>
</dbReference>
<dbReference type="GO" id="GO:1990904">
    <property type="term" value="C:ribonucleoprotein complex"/>
    <property type="evidence" value="ECO:0007669"/>
    <property type="project" value="UniProtKB-KW"/>
</dbReference>
<dbReference type="GO" id="GO:0005840">
    <property type="term" value="C:ribosome"/>
    <property type="evidence" value="ECO:0007669"/>
    <property type="project" value="UniProtKB-KW"/>
</dbReference>
<dbReference type="GO" id="GO:0019843">
    <property type="term" value="F:rRNA binding"/>
    <property type="evidence" value="ECO:0007669"/>
    <property type="project" value="UniProtKB-UniRule"/>
</dbReference>
<dbReference type="GO" id="GO:0003735">
    <property type="term" value="F:structural constituent of ribosome"/>
    <property type="evidence" value="ECO:0007669"/>
    <property type="project" value="InterPro"/>
</dbReference>
<dbReference type="GO" id="GO:0006412">
    <property type="term" value="P:translation"/>
    <property type="evidence" value="ECO:0007669"/>
    <property type="project" value="UniProtKB-UniRule"/>
</dbReference>
<dbReference type="Gene3D" id="3.30.70.330">
    <property type="match status" value="1"/>
</dbReference>
<dbReference type="HAMAP" id="MF_01369_B">
    <property type="entry name" value="Ribosomal_uL23_B"/>
    <property type="match status" value="1"/>
</dbReference>
<dbReference type="InterPro" id="IPR012677">
    <property type="entry name" value="Nucleotide-bd_a/b_plait_sf"/>
</dbReference>
<dbReference type="InterPro" id="IPR013025">
    <property type="entry name" value="Ribosomal_uL23-like"/>
</dbReference>
<dbReference type="InterPro" id="IPR012678">
    <property type="entry name" value="Ribosomal_uL23/eL15/eS24_sf"/>
</dbReference>
<dbReference type="NCBIfam" id="NF004362">
    <property type="entry name" value="PRK05738.2-2"/>
    <property type="match status" value="1"/>
</dbReference>
<dbReference type="Pfam" id="PF00276">
    <property type="entry name" value="Ribosomal_L23"/>
    <property type="match status" value="1"/>
</dbReference>
<dbReference type="SUPFAM" id="SSF54189">
    <property type="entry name" value="Ribosomal proteins S24e, L23 and L15e"/>
    <property type="match status" value="1"/>
</dbReference>
<organism>
    <name type="scientific">Campylobacter jejuni subsp. doylei (strain ATCC BAA-1458 / RM4099 / 269.97)</name>
    <dbReference type="NCBI Taxonomy" id="360109"/>
    <lineage>
        <taxon>Bacteria</taxon>
        <taxon>Pseudomonadati</taxon>
        <taxon>Campylobacterota</taxon>
        <taxon>Epsilonproteobacteria</taxon>
        <taxon>Campylobacterales</taxon>
        <taxon>Campylobacteraceae</taxon>
        <taxon>Campylobacter</taxon>
    </lineage>
</organism>
<evidence type="ECO:0000255" key="1">
    <source>
        <dbReference type="HAMAP-Rule" id="MF_01369"/>
    </source>
</evidence>
<evidence type="ECO:0000305" key="2"/>
<keyword id="KW-0687">Ribonucleoprotein</keyword>
<keyword id="KW-0689">Ribosomal protein</keyword>
<keyword id="KW-0694">RNA-binding</keyword>
<keyword id="KW-0699">rRNA-binding</keyword>